<gene>
    <name type="primary">LFL1</name>
    <name type="ordered locus">Os01g0713600</name>
    <name type="ordered locus">LOC_Os01g51610</name>
    <name type="ORF">B1142C05.32</name>
</gene>
<feature type="chain" id="PRO_0000378040" description="B3 domain-containing protein LFL1">
    <location>
        <begin position="1"/>
        <end position="402"/>
    </location>
</feature>
<feature type="DNA-binding region" description="TF-B3" evidence="1">
    <location>
        <begin position="181"/>
        <end position="284"/>
    </location>
</feature>
<feature type="region of interest" description="Disordered" evidence="2">
    <location>
        <begin position="1"/>
        <end position="174"/>
    </location>
</feature>
<feature type="region of interest" description="Disordered" evidence="2">
    <location>
        <begin position="381"/>
        <end position="402"/>
    </location>
</feature>
<feature type="compositionally biased region" description="Low complexity" evidence="2">
    <location>
        <begin position="74"/>
        <end position="87"/>
    </location>
</feature>
<feature type="compositionally biased region" description="Pro residues" evidence="2">
    <location>
        <begin position="88"/>
        <end position="102"/>
    </location>
</feature>
<feature type="compositionally biased region" description="Low complexity" evidence="2">
    <location>
        <begin position="103"/>
        <end position="139"/>
    </location>
</feature>
<feature type="compositionally biased region" description="Low complexity" evidence="2">
    <location>
        <begin position="156"/>
        <end position="169"/>
    </location>
</feature>
<name>LFL1_ORYSJ</name>
<keyword id="KW-0238">DNA-binding</keyword>
<keyword id="KW-0287">Flowering</keyword>
<keyword id="KW-0539">Nucleus</keyword>
<keyword id="KW-1185">Reference proteome</keyword>
<keyword id="KW-0678">Repressor</keyword>
<keyword id="KW-0804">Transcription</keyword>
<keyword id="KW-0805">Transcription regulation</keyword>
<organism>
    <name type="scientific">Oryza sativa subsp. japonica</name>
    <name type="common">Rice</name>
    <dbReference type="NCBI Taxonomy" id="39947"/>
    <lineage>
        <taxon>Eukaryota</taxon>
        <taxon>Viridiplantae</taxon>
        <taxon>Streptophyta</taxon>
        <taxon>Embryophyta</taxon>
        <taxon>Tracheophyta</taxon>
        <taxon>Spermatophyta</taxon>
        <taxon>Magnoliopsida</taxon>
        <taxon>Liliopsida</taxon>
        <taxon>Poales</taxon>
        <taxon>Poaceae</taxon>
        <taxon>BOP clade</taxon>
        <taxon>Oryzoideae</taxon>
        <taxon>Oryzeae</taxon>
        <taxon>Oryzinae</taxon>
        <taxon>Oryza</taxon>
        <taxon>Oryza sativa</taxon>
    </lineage>
</organism>
<comment type="function">
    <text evidence="3 4">Transcription repressor involved in flowering time regulation. Represses the flowering activator EHD1 by binding specifically to the DNA sequence 5'-CATGCATG-3 of its promoter.</text>
</comment>
<comment type="subcellular location">
    <subcellularLocation>
        <location evidence="1 4">Nucleus</location>
    </subcellularLocation>
</comment>
<comment type="tissue specificity">
    <text evidence="4">Expressed in anthers, pollen grains and young developing embryos.</text>
</comment>
<comment type="miscellaneous">
    <text>Plants overexpressing LFL1 show a late-flowering phenotype.</text>
</comment>
<comment type="sequence caution" evidence="5">
    <conflict type="erroneous initiation">
        <sequence resource="EMBL-CDS" id="BAD82277"/>
    </conflict>
</comment>
<comment type="sequence caution" evidence="5">
    <conflict type="erroneous initiation">
        <sequence resource="EMBL-CDS" id="BAF05967"/>
    </conflict>
</comment>
<comment type="sequence caution" evidence="5">
    <conflict type="erroneous initiation">
        <sequence resource="EMBL-CDS" id="BAG98960"/>
    </conflict>
</comment>
<evidence type="ECO:0000255" key="1">
    <source>
        <dbReference type="PROSITE-ProRule" id="PRU00326"/>
    </source>
</evidence>
<evidence type="ECO:0000256" key="2">
    <source>
        <dbReference type="SAM" id="MobiDB-lite"/>
    </source>
</evidence>
<evidence type="ECO:0000269" key="3">
    <source>
    </source>
</evidence>
<evidence type="ECO:0000269" key="4">
    <source>
    </source>
</evidence>
<evidence type="ECO:0000305" key="5"/>
<reference key="1">
    <citation type="journal article" date="2008" name="J. Plant Physiol.">
        <title>Overexpression of transcription factor OsLFL1 delays flowering time in Oryza sativa.</title>
        <authorList>
            <person name="Peng L.-T."/>
            <person name="Shi Z.-Y."/>
            <person name="Li L."/>
            <person name="Shen G.-Z."/>
            <person name="Zhang J.-L."/>
        </authorList>
    </citation>
    <scope>NUCLEOTIDE SEQUENCE [MRNA]</scope>
    <scope>FUNCTION</scope>
    <scope>SUBCELLULAR LOCATION</scope>
    <scope>TISSUE SPECIFICITY</scope>
    <source>
        <strain>cv. Zhonghua 11</strain>
    </source>
</reference>
<reference key="2">
    <citation type="journal article" date="2002" name="Nature">
        <title>The genome sequence and structure of rice chromosome 1.</title>
        <authorList>
            <person name="Sasaki T."/>
            <person name="Matsumoto T."/>
            <person name="Yamamoto K."/>
            <person name="Sakata K."/>
            <person name="Baba T."/>
            <person name="Katayose Y."/>
            <person name="Wu J."/>
            <person name="Niimura Y."/>
            <person name="Cheng Z."/>
            <person name="Nagamura Y."/>
            <person name="Antonio B.A."/>
            <person name="Kanamori H."/>
            <person name="Hosokawa S."/>
            <person name="Masukawa M."/>
            <person name="Arikawa K."/>
            <person name="Chiden Y."/>
            <person name="Hayashi M."/>
            <person name="Okamoto M."/>
            <person name="Ando T."/>
            <person name="Aoki H."/>
            <person name="Arita K."/>
            <person name="Hamada M."/>
            <person name="Harada C."/>
            <person name="Hijishita S."/>
            <person name="Honda M."/>
            <person name="Ichikawa Y."/>
            <person name="Idonuma A."/>
            <person name="Iijima M."/>
            <person name="Ikeda M."/>
            <person name="Ikeno M."/>
            <person name="Ito S."/>
            <person name="Ito T."/>
            <person name="Ito Y."/>
            <person name="Ito Y."/>
            <person name="Iwabuchi A."/>
            <person name="Kamiya K."/>
            <person name="Karasawa W."/>
            <person name="Katagiri S."/>
            <person name="Kikuta A."/>
            <person name="Kobayashi N."/>
            <person name="Kono I."/>
            <person name="Machita K."/>
            <person name="Maehara T."/>
            <person name="Mizuno H."/>
            <person name="Mizubayashi T."/>
            <person name="Mukai Y."/>
            <person name="Nagasaki H."/>
            <person name="Nakashima M."/>
            <person name="Nakama Y."/>
            <person name="Nakamichi Y."/>
            <person name="Nakamura M."/>
            <person name="Namiki N."/>
            <person name="Negishi M."/>
            <person name="Ohta I."/>
            <person name="Ono N."/>
            <person name="Saji S."/>
            <person name="Sakai K."/>
            <person name="Shibata M."/>
            <person name="Shimokawa T."/>
            <person name="Shomura A."/>
            <person name="Song J."/>
            <person name="Takazaki Y."/>
            <person name="Terasawa K."/>
            <person name="Tsuji K."/>
            <person name="Waki K."/>
            <person name="Yamagata H."/>
            <person name="Yamane H."/>
            <person name="Yoshiki S."/>
            <person name="Yoshihara R."/>
            <person name="Yukawa K."/>
            <person name="Zhong H."/>
            <person name="Iwama H."/>
            <person name="Endo T."/>
            <person name="Ito H."/>
            <person name="Hahn J.H."/>
            <person name="Kim H.-I."/>
            <person name="Eun M.-Y."/>
            <person name="Yano M."/>
            <person name="Jiang J."/>
            <person name="Gojobori T."/>
        </authorList>
    </citation>
    <scope>NUCLEOTIDE SEQUENCE [LARGE SCALE GENOMIC DNA]</scope>
    <source>
        <strain>cv. Nipponbare</strain>
    </source>
</reference>
<reference key="3">
    <citation type="journal article" date="2005" name="Nature">
        <title>The map-based sequence of the rice genome.</title>
        <authorList>
            <consortium name="International rice genome sequencing project (IRGSP)"/>
        </authorList>
    </citation>
    <scope>NUCLEOTIDE SEQUENCE [LARGE SCALE GENOMIC DNA]</scope>
    <source>
        <strain>cv. Nipponbare</strain>
    </source>
</reference>
<reference key="4">
    <citation type="journal article" date="2008" name="Nucleic Acids Res.">
        <title>The rice annotation project database (RAP-DB): 2008 update.</title>
        <authorList>
            <consortium name="The rice annotation project (RAP)"/>
        </authorList>
    </citation>
    <scope>GENOME REANNOTATION</scope>
    <source>
        <strain>cv. Nipponbare</strain>
    </source>
</reference>
<reference key="5">
    <citation type="journal article" date="2013" name="Rice">
        <title>Improvement of the Oryza sativa Nipponbare reference genome using next generation sequence and optical map data.</title>
        <authorList>
            <person name="Kawahara Y."/>
            <person name="de la Bastide M."/>
            <person name="Hamilton J.P."/>
            <person name="Kanamori H."/>
            <person name="McCombie W.R."/>
            <person name="Ouyang S."/>
            <person name="Schwartz D.C."/>
            <person name="Tanaka T."/>
            <person name="Wu J."/>
            <person name="Zhou S."/>
            <person name="Childs K.L."/>
            <person name="Davidson R.M."/>
            <person name="Lin H."/>
            <person name="Quesada-Ocampo L."/>
            <person name="Vaillancourt B."/>
            <person name="Sakai H."/>
            <person name="Lee S.S."/>
            <person name="Kim J."/>
            <person name="Numa H."/>
            <person name="Itoh T."/>
            <person name="Buell C.R."/>
            <person name="Matsumoto T."/>
        </authorList>
    </citation>
    <scope>GENOME REANNOTATION</scope>
    <source>
        <strain>cv. Nipponbare</strain>
    </source>
</reference>
<reference key="6">
    <citation type="journal article" date="2003" name="Science">
        <title>Collection, mapping, and annotation of over 28,000 cDNA clones from japonica rice.</title>
        <authorList>
            <consortium name="The rice full-length cDNA consortium"/>
        </authorList>
    </citation>
    <scope>NUCLEOTIDE SEQUENCE [LARGE SCALE MRNA] OF 80-402</scope>
    <source>
        <strain>cv. Nipponbare</strain>
    </source>
</reference>
<reference key="7">
    <citation type="journal article" date="2007" name="Biochem. Biophys. Res. Commun.">
        <title>Ectopic expression of OsLFL1 in rice represses Ehd1 by binding on its promoter.</title>
        <authorList>
            <person name="Peng L.-T."/>
            <person name="Shi Z.-Y."/>
            <person name="Li L."/>
            <person name="Shen G.-Z."/>
            <person name="Zhang J.-L."/>
        </authorList>
    </citation>
    <scope>FUNCTION</scope>
</reference>
<proteinExistence type="evidence at transcript level"/>
<protein>
    <recommendedName>
        <fullName>B3 domain-containing protein LFL1</fullName>
    </recommendedName>
    <alternativeName>
        <fullName>LEC2 and FUSCA3-like protein 1</fullName>
        <shortName>OsLFL1</shortName>
    </alternativeName>
</protein>
<accession>A4LBC0</accession>
<accession>Q5N8D2</accession>
<sequence length="402" mass="43409">MRGEERWQEQPALASHPSRATLRPRGWPRLGLAPTGVGSSCPPAPASELARHLARRAPVSASPPVLPPIKDQGARPPTLAASAAAASSPPPPPPPPIPPLPPSTSTSAARPTDMAGVTSKRRSSSASTSSSSGDGAAVSDRPRGVTRKRRSGGRCPRPAASLRPAAPRPSSHHTAGLRVILQKELRYSDVSQLGRIVLPKKEAEAYLPILTSKDGKKSLCMHDLQNAQLWTFKYRYWPNNKSRMYVLENTGDYVRTHDLQLGDSIVIYKDDENNRFVIGAKKAGDQQAATVPQVDEHISTLFPIFPIAQVDDYLSPMAPQVDISAFVPHADENHEIFDGILNSLPEIPVANVRYSDFFDPFDDGMDMANTLNANANQSASLHVTDDKSGHSLIPNPKSGPHM</sequence>
<dbReference type="EMBL" id="EF521182">
    <property type="protein sequence ID" value="ABO64645.1"/>
    <property type="molecule type" value="mRNA"/>
</dbReference>
<dbReference type="EMBL" id="AP003410">
    <property type="protein sequence ID" value="BAD82277.1"/>
    <property type="status" value="ALT_INIT"/>
    <property type="molecule type" value="Genomic_DNA"/>
</dbReference>
<dbReference type="EMBL" id="AP008207">
    <property type="protein sequence ID" value="BAF05967.1"/>
    <property type="status" value="ALT_INIT"/>
    <property type="molecule type" value="Genomic_DNA"/>
</dbReference>
<dbReference type="EMBL" id="AP014957">
    <property type="status" value="NOT_ANNOTATED_CDS"/>
    <property type="molecule type" value="Genomic_DNA"/>
</dbReference>
<dbReference type="EMBL" id="AK109920">
    <property type="protein sequence ID" value="BAG98960.1"/>
    <property type="status" value="ALT_INIT"/>
    <property type="molecule type" value="mRNA"/>
</dbReference>
<dbReference type="RefSeq" id="XP_015635173.1">
    <property type="nucleotide sequence ID" value="XM_015779687.1"/>
</dbReference>
<dbReference type="SMR" id="A4LBC0"/>
<dbReference type="FunCoup" id="A4LBC0">
    <property type="interactions" value="117"/>
</dbReference>
<dbReference type="STRING" id="39947.A4LBC0"/>
<dbReference type="PaxDb" id="39947-A4LBC0"/>
<dbReference type="EnsemblPlants" id="Os01t0713600-01">
    <property type="protein sequence ID" value="Os01t0713600-01"/>
    <property type="gene ID" value="Os01g0713600"/>
</dbReference>
<dbReference type="Gramene" id="Os01t0713600-01">
    <property type="protein sequence ID" value="Os01t0713600-01"/>
    <property type="gene ID" value="Os01g0713600"/>
</dbReference>
<dbReference type="KEGG" id="dosa:Os01g0713600"/>
<dbReference type="eggNOG" id="ENOG502QPW6">
    <property type="taxonomic scope" value="Eukaryota"/>
</dbReference>
<dbReference type="HOGENOM" id="CLU_058916_0_0_1"/>
<dbReference type="InParanoid" id="A4LBC0"/>
<dbReference type="OrthoDB" id="757982at2759"/>
<dbReference type="PlantReactome" id="R-OSA-8934036">
    <property type="pathway name" value="Long day regulated expression of florigens"/>
</dbReference>
<dbReference type="PlantReactome" id="R-OSA-9631623">
    <property type="pathway name" value="Regulation of embryo development"/>
</dbReference>
<dbReference type="Proteomes" id="UP000000763">
    <property type="component" value="Chromosome 1"/>
</dbReference>
<dbReference type="Proteomes" id="UP000059680">
    <property type="component" value="Chromosome 1"/>
</dbReference>
<dbReference type="GO" id="GO:0005634">
    <property type="term" value="C:nucleus"/>
    <property type="evidence" value="ECO:0000314"/>
    <property type="project" value="UniProtKB"/>
</dbReference>
<dbReference type="GO" id="GO:0003700">
    <property type="term" value="F:DNA-binding transcription factor activity"/>
    <property type="evidence" value="ECO:0000314"/>
    <property type="project" value="UniProtKB"/>
</dbReference>
<dbReference type="GO" id="GO:0000976">
    <property type="term" value="F:transcription cis-regulatory region binding"/>
    <property type="evidence" value="ECO:0000314"/>
    <property type="project" value="UniProtKB"/>
</dbReference>
<dbReference type="GO" id="GO:0009908">
    <property type="term" value="P:flower development"/>
    <property type="evidence" value="ECO:0007669"/>
    <property type="project" value="UniProtKB-KW"/>
</dbReference>
<dbReference type="GO" id="GO:0048573">
    <property type="term" value="P:photoperiodism, flowering"/>
    <property type="evidence" value="ECO:0000315"/>
    <property type="project" value="UniProtKB"/>
</dbReference>
<dbReference type="GO" id="GO:0006355">
    <property type="term" value="P:regulation of DNA-templated transcription"/>
    <property type="evidence" value="ECO:0000314"/>
    <property type="project" value="UniProtKB"/>
</dbReference>
<dbReference type="CDD" id="cd10017">
    <property type="entry name" value="B3_DNA"/>
    <property type="match status" value="1"/>
</dbReference>
<dbReference type="FunFam" id="2.40.330.10:FF:000003">
    <property type="entry name" value="B3 domain-containing transcription factor FUS3"/>
    <property type="match status" value="1"/>
</dbReference>
<dbReference type="Gene3D" id="2.40.330.10">
    <property type="entry name" value="DNA-binding pseudobarrel domain"/>
    <property type="match status" value="1"/>
</dbReference>
<dbReference type="InterPro" id="IPR003340">
    <property type="entry name" value="B3_DNA-bd"/>
</dbReference>
<dbReference type="InterPro" id="IPR015300">
    <property type="entry name" value="DNA-bd_pseudobarrel_sf"/>
</dbReference>
<dbReference type="InterPro" id="IPR044800">
    <property type="entry name" value="LEC2-like"/>
</dbReference>
<dbReference type="PANTHER" id="PTHR31140">
    <property type="entry name" value="B3 DOMAIN-CONTAINING TRANSCRIPTION FACTOR ABI3"/>
    <property type="match status" value="1"/>
</dbReference>
<dbReference type="PANTHER" id="PTHR31140:SF73">
    <property type="entry name" value="B3 DOMAIN-CONTAINING TRANSCRIPTION FACTOR FUS3"/>
    <property type="match status" value="1"/>
</dbReference>
<dbReference type="Pfam" id="PF02362">
    <property type="entry name" value="B3"/>
    <property type="match status" value="1"/>
</dbReference>
<dbReference type="SMART" id="SM01019">
    <property type="entry name" value="B3"/>
    <property type="match status" value="1"/>
</dbReference>
<dbReference type="SUPFAM" id="SSF101936">
    <property type="entry name" value="DNA-binding pseudobarrel domain"/>
    <property type="match status" value="1"/>
</dbReference>
<dbReference type="PROSITE" id="PS50863">
    <property type="entry name" value="B3"/>
    <property type="match status" value="1"/>
</dbReference>